<evidence type="ECO:0000255" key="1"/>
<evidence type="ECO:0000255" key="2">
    <source>
        <dbReference type="PROSITE-ProRule" id="PRU00499"/>
    </source>
</evidence>
<evidence type="ECO:0000255" key="3">
    <source>
        <dbReference type="PROSITE-ProRule" id="PRU00542"/>
    </source>
</evidence>
<evidence type="ECO:0000256" key="4">
    <source>
        <dbReference type="SAM" id="MobiDB-lite"/>
    </source>
</evidence>
<evidence type="ECO:0000269" key="5">
    <source>
    </source>
</evidence>
<evidence type="ECO:0000269" key="6">
    <source>
    </source>
</evidence>
<evidence type="ECO:0000269" key="7">
    <source>
    </source>
</evidence>
<evidence type="ECO:0000269" key="8">
    <source>
    </source>
</evidence>
<evidence type="ECO:0000269" key="9">
    <source>
    </source>
</evidence>
<evidence type="ECO:0000269" key="10">
    <source>
    </source>
</evidence>
<evidence type="ECO:0000269" key="11">
    <source>
    </source>
</evidence>
<evidence type="ECO:0000269" key="12">
    <source>
    </source>
</evidence>
<evidence type="ECO:0000269" key="13">
    <source>
    </source>
</evidence>
<evidence type="ECO:0000269" key="14">
    <source>
    </source>
</evidence>
<evidence type="ECO:0000269" key="15">
    <source>
    </source>
</evidence>
<evidence type="ECO:0000269" key="16">
    <source>
    </source>
</evidence>
<evidence type="ECO:0000269" key="17">
    <source>
    </source>
</evidence>
<evidence type="ECO:0000305" key="18"/>
<evidence type="ECO:0007744" key="19">
    <source>
    </source>
</evidence>
<evidence type="ECO:0007744" key="20">
    <source>
    </source>
</evidence>
<evidence type="ECO:0007744" key="21">
    <source>
    </source>
</evidence>
<evidence type="ECO:0007829" key="22">
    <source>
        <dbReference type="PDB" id="3RC3"/>
    </source>
</evidence>
<evidence type="ECO:0007829" key="23">
    <source>
        <dbReference type="PDB" id="3RC8"/>
    </source>
</evidence>
<reference key="1">
    <citation type="journal article" date="1999" name="Acta Biochim. Pol.">
        <title>A human putative Suv3-like RNA helicase is conserved between Rhodobacter and all eukaryotes.</title>
        <authorList>
            <person name="Dmochowska A."/>
            <person name="Kalita K."/>
            <person name="Krawczyk M."/>
            <person name="Golik P."/>
            <person name="Mroczek K."/>
            <person name="Lazowska J."/>
            <person name="Stepien P.P."/>
            <person name="Bartnik E."/>
        </authorList>
    </citation>
    <scope>NUCLEOTIDE SEQUENCE [MRNA]</scope>
    <scope>TISSUE SPECIFICITY</scope>
</reference>
<reference key="2">
    <citation type="journal article" date="2004" name="Nat. Genet.">
        <title>Complete sequencing and characterization of 21,243 full-length human cDNAs.</title>
        <authorList>
            <person name="Ota T."/>
            <person name="Suzuki Y."/>
            <person name="Nishikawa T."/>
            <person name="Otsuki T."/>
            <person name="Sugiyama T."/>
            <person name="Irie R."/>
            <person name="Wakamatsu A."/>
            <person name="Hayashi K."/>
            <person name="Sato H."/>
            <person name="Nagai K."/>
            <person name="Kimura K."/>
            <person name="Makita H."/>
            <person name="Sekine M."/>
            <person name="Obayashi M."/>
            <person name="Nishi T."/>
            <person name="Shibahara T."/>
            <person name="Tanaka T."/>
            <person name="Ishii S."/>
            <person name="Yamamoto J."/>
            <person name="Saito K."/>
            <person name="Kawai Y."/>
            <person name="Isono Y."/>
            <person name="Nakamura Y."/>
            <person name="Nagahari K."/>
            <person name="Murakami K."/>
            <person name="Yasuda T."/>
            <person name="Iwayanagi T."/>
            <person name="Wagatsuma M."/>
            <person name="Shiratori A."/>
            <person name="Sudo H."/>
            <person name="Hosoiri T."/>
            <person name="Kaku Y."/>
            <person name="Kodaira H."/>
            <person name="Kondo H."/>
            <person name="Sugawara M."/>
            <person name="Takahashi M."/>
            <person name="Kanda K."/>
            <person name="Yokoi T."/>
            <person name="Furuya T."/>
            <person name="Kikkawa E."/>
            <person name="Omura Y."/>
            <person name="Abe K."/>
            <person name="Kamihara K."/>
            <person name="Katsuta N."/>
            <person name="Sato K."/>
            <person name="Tanikawa M."/>
            <person name="Yamazaki M."/>
            <person name="Ninomiya K."/>
            <person name="Ishibashi T."/>
            <person name="Yamashita H."/>
            <person name="Murakawa K."/>
            <person name="Fujimori K."/>
            <person name="Tanai H."/>
            <person name="Kimata M."/>
            <person name="Watanabe M."/>
            <person name="Hiraoka S."/>
            <person name="Chiba Y."/>
            <person name="Ishida S."/>
            <person name="Ono Y."/>
            <person name="Takiguchi S."/>
            <person name="Watanabe S."/>
            <person name="Yosida M."/>
            <person name="Hotuta T."/>
            <person name="Kusano J."/>
            <person name="Kanehori K."/>
            <person name="Takahashi-Fujii A."/>
            <person name="Hara H."/>
            <person name="Tanase T.-O."/>
            <person name="Nomura Y."/>
            <person name="Togiya S."/>
            <person name="Komai F."/>
            <person name="Hara R."/>
            <person name="Takeuchi K."/>
            <person name="Arita M."/>
            <person name="Imose N."/>
            <person name="Musashino K."/>
            <person name="Yuuki H."/>
            <person name="Oshima A."/>
            <person name="Sasaki N."/>
            <person name="Aotsuka S."/>
            <person name="Yoshikawa Y."/>
            <person name="Matsunawa H."/>
            <person name="Ichihara T."/>
            <person name="Shiohata N."/>
            <person name="Sano S."/>
            <person name="Moriya S."/>
            <person name="Momiyama H."/>
            <person name="Satoh N."/>
            <person name="Takami S."/>
            <person name="Terashima Y."/>
            <person name="Suzuki O."/>
            <person name="Nakagawa S."/>
            <person name="Senoh A."/>
            <person name="Mizoguchi H."/>
            <person name="Goto Y."/>
            <person name="Shimizu F."/>
            <person name="Wakebe H."/>
            <person name="Hishigaki H."/>
            <person name="Watanabe T."/>
            <person name="Sugiyama A."/>
            <person name="Takemoto M."/>
            <person name="Kawakami B."/>
            <person name="Yamazaki M."/>
            <person name="Watanabe K."/>
            <person name="Kumagai A."/>
            <person name="Itakura S."/>
            <person name="Fukuzumi Y."/>
            <person name="Fujimori Y."/>
            <person name="Komiyama M."/>
            <person name="Tashiro H."/>
            <person name="Tanigami A."/>
            <person name="Fujiwara T."/>
            <person name="Ono T."/>
            <person name="Yamada K."/>
            <person name="Fujii Y."/>
            <person name="Ozaki K."/>
            <person name="Hirao M."/>
            <person name="Ohmori Y."/>
            <person name="Kawabata A."/>
            <person name="Hikiji T."/>
            <person name="Kobatake N."/>
            <person name="Inagaki H."/>
            <person name="Ikema Y."/>
            <person name="Okamoto S."/>
            <person name="Okitani R."/>
            <person name="Kawakami T."/>
            <person name="Noguchi S."/>
            <person name="Itoh T."/>
            <person name="Shigeta K."/>
            <person name="Senba T."/>
            <person name="Matsumura K."/>
            <person name="Nakajima Y."/>
            <person name="Mizuno T."/>
            <person name="Morinaga M."/>
            <person name="Sasaki M."/>
            <person name="Togashi T."/>
            <person name="Oyama M."/>
            <person name="Hata H."/>
            <person name="Watanabe M."/>
            <person name="Komatsu T."/>
            <person name="Mizushima-Sugano J."/>
            <person name="Satoh T."/>
            <person name="Shirai Y."/>
            <person name="Takahashi Y."/>
            <person name="Nakagawa K."/>
            <person name="Okumura K."/>
            <person name="Nagase T."/>
            <person name="Nomura N."/>
            <person name="Kikuchi H."/>
            <person name="Masuho Y."/>
            <person name="Yamashita R."/>
            <person name="Nakai K."/>
            <person name="Yada T."/>
            <person name="Nakamura Y."/>
            <person name="Ohara O."/>
            <person name="Isogai T."/>
            <person name="Sugano S."/>
        </authorList>
    </citation>
    <scope>NUCLEOTIDE SEQUENCE [LARGE SCALE MRNA]</scope>
    <source>
        <tissue>Umbilical cord blood</tissue>
    </source>
</reference>
<reference key="3">
    <citation type="journal article" date="2004" name="Nature">
        <title>The DNA sequence and comparative analysis of human chromosome 10.</title>
        <authorList>
            <person name="Deloukas P."/>
            <person name="Earthrowl M.E."/>
            <person name="Grafham D.V."/>
            <person name="Rubenfield M."/>
            <person name="French L."/>
            <person name="Steward C.A."/>
            <person name="Sims S.K."/>
            <person name="Jones M.C."/>
            <person name="Searle S."/>
            <person name="Scott C."/>
            <person name="Howe K."/>
            <person name="Hunt S.E."/>
            <person name="Andrews T.D."/>
            <person name="Gilbert J.G.R."/>
            <person name="Swarbreck D."/>
            <person name="Ashurst J.L."/>
            <person name="Taylor A."/>
            <person name="Battles J."/>
            <person name="Bird C.P."/>
            <person name="Ainscough R."/>
            <person name="Almeida J.P."/>
            <person name="Ashwell R.I.S."/>
            <person name="Ambrose K.D."/>
            <person name="Babbage A.K."/>
            <person name="Bagguley C.L."/>
            <person name="Bailey J."/>
            <person name="Banerjee R."/>
            <person name="Bates K."/>
            <person name="Beasley H."/>
            <person name="Bray-Allen S."/>
            <person name="Brown A.J."/>
            <person name="Brown J.Y."/>
            <person name="Burford D.C."/>
            <person name="Burrill W."/>
            <person name="Burton J."/>
            <person name="Cahill P."/>
            <person name="Camire D."/>
            <person name="Carter N.P."/>
            <person name="Chapman J.C."/>
            <person name="Clark S.Y."/>
            <person name="Clarke G."/>
            <person name="Clee C.M."/>
            <person name="Clegg S."/>
            <person name="Corby N."/>
            <person name="Coulson A."/>
            <person name="Dhami P."/>
            <person name="Dutta I."/>
            <person name="Dunn M."/>
            <person name="Faulkner L."/>
            <person name="Frankish A."/>
            <person name="Frankland J.A."/>
            <person name="Garner P."/>
            <person name="Garnett J."/>
            <person name="Gribble S."/>
            <person name="Griffiths C."/>
            <person name="Grocock R."/>
            <person name="Gustafson E."/>
            <person name="Hammond S."/>
            <person name="Harley J.L."/>
            <person name="Hart E."/>
            <person name="Heath P.D."/>
            <person name="Ho T.P."/>
            <person name="Hopkins B."/>
            <person name="Horne J."/>
            <person name="Howden P.J."/>
            <person name="Huckle E."/>
            <person name="Hynds C."/>
            <person name="Johnson C."/>
            <person name="Johnson D."/>
            <person name="Kana A."/>
            <person name="Kay M."/>
            <person name="Kimberley A.M."/>
            <person name="Kershaw J.K."/>
            <person name="Kokkinaki M."/>
            <person name="Laird G.K."/>
            <person name="Lawlor S."/>
            <person name="Lee H.M."/>
            <person name="Leongamornlert D.A."/>
            <person name="Laird G."/>
            <person name="Lloyd C."/>
            <person name="Lloyd D.M."/>
            <person name="Loveland J."/>
            <person name="Lovell J."/>
            <person name="McLaren S."/>
            <person name="McLay K.E."/>
            <person name="McMurray A."/>
            <person name="Mashreghi-Mohammadi M."/>
            <person name="Matthews L."/>
            <person name="Milne S."/>
            <person name="Nickerson T."/>
            <person name="Nguyen M."/>
            <person name="Overton-Larty E."/>
            <person name="Palmer S.A."/>
            <person name="Pearce A.V."/>
            <person name="Peck A.I."/>
            <person name="Pelan S."/>
            <person name="Phillimore B."/>
            <person name="Porter K."/>
            <person name="Rice C.M."/>
            <person name="Rogosin A."/>
            <person name="Ross M.T."/>
            <person name="Sarafidou T."/>
            <person name="Sehra H.K."/>
            <person name="Shownkeen R."/>
            <person name="Skuce C.D."/>
            <person name="Smith M."/>
            <person name="Standring L."/>
            <person name="Sycamore N."/>
            <person name="Tester J."/>
            <person name="Thorpe A."/>
            <person name="Torcasso W."/>
            <person name="Tracey A."/>
            <person name="Tromans A."/>
            <person name="Tsolas J."/>
            <person name="Wall M."/>
            <person name="Walsh J."/>
            <person name="Wang H."/>
            <person name="Weinstock K."/>
            <person name="West A.P."/>
            <person name="Willey D.L."/>
            <person name="Whitehead S.L."/>
            <person name="Wilming L."/>
            <person name="Wray P.W."/>
            <person name="Young L."/>
            <person name="Chen Y."/>
            <person name="Lovering R.C."/>
            <person name="Moschonas N.K."/>
            <person name="Siebert R."/>
            <person name="Fechtel K."/>
            <person name="Bentley D."/>
            <person name="Durbin R.M."/>
            <person name="Hubbard T."/>
            <person name="Doucette-Stamm L."/>
            <person name="Beck S."/>
            <person name="Smith D.R."/>
            <person name="Rogers J."/>
        </authorList>
    </citation>
    <scope>NUCLEOTIDE SEQUENCE [LARGE SCALE GENOMIC DNA]</scope>
</reference>
<reference key="4">
    <citation type="submission" date="2005-07" db="EMBL/GenBank/DDBJ databases">
        <authorList>
            <person name="Mural R.J."/>
            <person name="Istrail S."/>
            <person name="Sutton G.G."/>
            <person name="Florea L."/>
            <person name="Halpern A.L."/>
            <person name="Mobarry C.M."/>
            <person name="Lippert R."/>
            <person name="Walenz B."/>
            <person name="Shatkay H."/>
            <person name="Dew I."/>
            <person name="Miller J.R."/>
            <person name="Flanigan M.J."/>
            <person name="Edwards N.J."/>
            <person name="Bolanos R."/>
            <person name="Fasulo D."/>
            <person name="Halldorsson B.V."/>
            <person name="Hannenhalli S."/>
            <person name="Turner R."/>
            <person name="Yooseph S."/>
            <person name="Lu F."/>
            <person name="Nusskern D.R."/>
            <person name="Shue B.C."/>
            <person name="Zheng X.H."/>
            <person name="Zhong F."/>
            <person name="Delcher A.L."/>
            <person name="Huson D.H."/>
            <person name="Kravitz S.A."/>
            <person name="Mouchard L."/>
            <person name="Reinert K."/>
            <person name="Remington K.A."/>
            <person name="Clark A.G."/>
            <person name="Waterman M.S."/>
            <person name="Eichler E.E."/>
            <person name="Adams M.D."/>
            <person name="Hunkapiller M.W."/>
            <person name="Myers E.W."/>
            <person name="Venter J.C."/>
        </authorList>
    </citation>
    <scope>NUCLEOTIDE SEQUENCE [LARGE SCALE GENOMIC DNA]</scope>
</reference>
<reference key="5">
    <citation type="journal article" date="2004" name="Genome Res.">
        <title>The status, quality, and expansion of the NIH full-length cDNA project: the Mammalian Gene Collection (MGC).</title>
        <authorList>
            <consortium name="The MGC Project Team"/>
        </authorList>
    </citation>
    <scope>NUCLEOTIDE SEQUENCE [LARGE SCALE MRNA]</scope>
    <source>
        <tissue>Testis</tissue>
    </source>
</reference>
<reference key="6">
    <citation type="journal article" date="2002" name="Nucleic Acids Res.">
        <title>Localisation of the human hSuv3p helicase in the mitochondrial matrix and its preferential unwinding of dsDNA.</title>
        <authorList>
            <person name="Minczuk M."/>
            <person name="Piwowarski J."/>
            <person name="Papworth M.A."/>
            <person name="Awiszus K."/>
            <person name="Schalinski S."/>
            <person name="Dziembowski A."/>
            <person name="Dmochowska A."/>
            <person name="Bartnik E."/>
            <person name="Tokatlidis K."/>
            <person name="Stepien P.P."/>
            <person name="Borowski P."/>
        </authorList>
    </citation>
    <scope>FUNCTION</scope>
    <scope>CATALYTIC ACTIVITY</scope>
    <scope>BIOPHYSICOCHEMICAL PROPERTIES</scope>
    <scope>SUBCELLULAR LOCATION</scope>
    <scope>MUTAGENESIS OF GLY-207</scope>
</reference>
<reference key="7">
    <citation type="journal article" date="2003" name="Eur. J. Biochem.">
        <title>Halogenated benzimidazoles and benzotriazoles as inhibitors of the NTPase/helicase activities of hepatitis C and related viruses.</title>
        <authorList>
            <person name="Borowski P."/>
            <person name="Deinert J."/>
            <person name="Schalinski S."/>
            <person name="Bretner M."/>
            <person name="Ginalski K."/>
            <person name="Kulikowski T."/>
            <person name="Shugar D."/>
        </authorList>
    </citation>
    <scope>ACTIVITY REGULATION</scope>
</reference>
<reference key="8">
    <citation type="journal article" date="2003" name="J. Med. Chem.">
        <title>Potent inhibition of NTPase/helicase of the West Nile Virus by ring-expanded ('fat') nucleoside analogues.</title>
        <authorList>
            <person name="Zhang N."/>
            <person name="Chen H.-M."/>
            <person name="Koch V."/>
            <person name="Schmitz H."/>
            <person name="Minczuk M."/>
            <person name="Stepien P."/>
            <person name="Fattom A.I."/>
            <person name="Naso R.B."/>
            <person name="Kalicharran K."/>
            <person name="Borowski P."/>
            <person name="Hosmane R.S."/>
        </authorList>
    </citation>
    <scope>ACTIVITY REGULATION</scope>
</reference>
<reference key="9">
    <citation type="journal article" date="2004" name="Biochemistry">
        <title>Purified human SUV3p exhibits multiple-substrate unwinding activity upon conformational change.</title>
        <authorList>
            <person name="Shu Z."/>
            <person name="Vijayakumar S."/>
            <person name="Chen C.-F."/>
            <person name="Chen P.-L."/>
            <person name="Lee W.-H."/>
        </authorList>
    </citation>
    <scope>FUNCTION</scope>
    <scope>BIOPHYSICOCHEMICAL PROPERTIES</scope>
    <scope>COFACTOR</scope>
    <scope>MUTAGENESIS OF LYS-213</scope>
</reference>
<reference key="10">
    <citation type="journal article" date="2005" name="FEBS J.">
        <title>Human ATP-dependent RNA/DNA helicase hSuv3p interacts with the cofactor of survivin HBXIP.</title>
        <authorList>
            <person name="Minczuk M."/>
            <person name="Mroczek S."/>
            <person name="Pawlak S.D."/>
            <person name="Stepien P.P."/>
        </authorList>
    </citation>
    <scope>INTERACTION WITH LAMTOR5/HBXIP</scope>
</reference>
<reference key="11">
    <citation type="journal article" date="2007" name="Biol. Cell">
        <title>Down-regulation of human RNA/DNA helicase SUV3 induces apoptosis by a caspase- and AIF-dependent pathway.</title>
        <authorList>
            <person name="Szczesny R.J."/>
            <person name="Obriot H."/>
            <person name="Paczkowska A."/>
            <person name="Jedrzejczak R."/>
            <person name="Dmochowska A."/>
            <person name="Bartnik E."/>
            <person name="Formstecher P."/>
            <person name="Polakowska R."/>
            <person name="Stepien P.P."/>
        </authorList>
    </citation>
    <scope>SUBCELLULAR LOCATION</scope>
    <scope>FUNCTION</scope>
</reference>
<reference key="12">
    <citation type="journal article" date="2007" name="Mech. Ageing Dev.">
        <title>Interaction of human SUV3 RNA/DNA helicase with BLM helicase; loss of the SUV3 gene results in mouse embryonic lethality.</title>
        <authorList>
            <person name="Pereira M."/>
            <person name="Mason P."/>
            <person name="Szczesny R.J."/>
            <person name="Maddukuri L."/>
            <person name="Dziwura S."/>
            <person name="Jedrzejczak R."/>
            <person name="Paul E."/>
            <person name="Wojcik A."/>
            <person name="Dybczynska L."/>
            <person name="Tudek B."/>
            <person name="Bartnik E."/>
            <person name="Klysik J."/>
            <person name="Bohr V.A."/>
            <person name="Stepien P.P."/>
        </authorList>
    </citation>
    <scope>FUNCTION</scope>
    <scope>INTERACTION WITH WRN AND BLM</scope>
</reference>
<reference key="13">
    <citation type="journal article" date="2008" name="J. Biol. Chem.">
        <title>The layered structure of human mitochondrial DNA nucleoids.</title>
        <authorList>
            <person name="Bogenhagen D.F."/>
            <person name="Rousseau D."/>
            <person name="Burke S."/>
        </authorList>
    </citation>
    <scope>SUBCELLULAR LOCATION</scope>
    <scope>ASSOCIATION WITH MITOCHONDRIAL DNA</scope>
    <scope>IDENTIFICATION BY MASS SPECTROMETRY</scope>
</reference>
<reference key="14">
    <citation type="journal article" date="2008" name="J. Biol. Chem.">
        <title>Role of SUV3 helicase in maintaining mitochondrial homeostasis in human cells.</title>
        <authorList>
            <person name="Khidr L."/>
            <person name="Wu G."/>
            <person name="Davila A."/>
            <person name="Procaccio V."/>
            <person name="Wallace D."/>
            <person name="Lee W.H."/>
        </authorList>
    </citation>
    <scope>FUNCTION</scope>
</reference>
<reference key="15">
    <citation type="journal article" date="2008" name="Proc. Natl. Acad. Sci. U.S.A.">
        <title>A quantitative atlas of mitotic phosphorylation.</title>
        <authorList>
            <person name="Dephoure N."/>
            <person name="Zhou C."/>
            <person name="Villen J."/>
            <person name="Beausoleil S.A."/>
            <person name="Bakalarski C.E."/>
            <person name="Elledge S.J."/>
            <person name="Gygi S.P."/>
        </authorList>
    </citation>
    <scope>PHOSPHORYLATION [LARGE SCALE ANALYSIS] AT SER-725</scope>
    <scope>IDENTIFICATION BY MASS SPECTROMETRY [LARGE SCALE ANALYSIS]</scope>
    <source>
        <tissue>Cervix carcinoma</tissue>
    </source>
</reference>
<reference key="16">
    <citation type="journal article" date="2009" name="J. Biol. Chem.">
        <title>Human mitochondrial SUV3 and polynucleotide phosphorylase form a 330-kDa heteropentamer to cooperatively degrade double-stranded RNA with a 3'-to-5' directionality.</title>
        <authorList>
            <person name="Wang D.D."/>
            <person name="Shu Z."/>
            <person name="Lieser S.A."/>
            <person name="Chen P.L."/>
            <person name="Lee W.H."/>
        </authorList>
    </citation>
    <scope>FUNCTION</scope>
    <scope>IDENTIFICATION IN THE MITOCHONDRIAL DEGRADOSOME COMPLEX</scope>
    <scope>RNA-BINDING</scope>
    <scope>HOMODIMERIZATION</scope>
    <scope>MUTAGENESIS OF LYS-213 AND 576-THR--LYS-581</scope>
</reference>
<reference key="17">
    <citation type="journal article" date="2009" name="Science">
        <title>Lysine acetylation targets protein complexes and co-regulates major cellular functions.</title>
        <authorList>
            <person name="Choudhary C."/>
            <person name="Kumar C."/>
            <person name="Gnad F."/>
            <person name="Nielsen M.L."/>
            <person name="Rehman M."/>
            <person name="Walther T.C."/>
            <person name="Olsen J.V."/>
            <person name="Mann M."/>
        </authorList>
    </citation>
    <scope>ACETYLATION [LARGE SCALE ANALYSIS] AT LYS-99 AND LYS-220</scope>
    <scope>IDENTIFICATION BY MASS SPECTROMETRY [LARGE SCALE ANALYSIS]</scope>
</reference>
<reference key="18">
    <citation type="journal article" date="2010" name="Nucleic Acids Res.">
        <title>Human mitochondrial RNA turnover caught in flagranti: involvement of hSuv3p helicase in RNA surveillance.</title>
        <authorList>
            <person name="Szczesny R.J."/>
            <person name="Borowski L.S."/>
            <person name="Brzezniak L.K."/>
            <person name="Dmochowska A."/>
            <person name="Gewartowski K."/>
            <person name="Bartnik E."/>
            <person name="Stepien P.P."/>
        </authorList>
    </citation>
    <scope>FUNCTION</scope>
    <scope>SUBCELLULAR LOCATION</scope>
</reference>
<reference key="19">
    <citation type="journal article" date="2011" name="BMC Syst. Biol.">
        <title>Initial characterization of the human central proteome.</title>
        <authorList>
            <person name="Burkard T.R."/>
            <person name="Planyavsky M."/>
            <person name="Kaupe I."/>
            <person name="Breitwieser F.P."/>
            <person name="Buerckstuemmer T."/>
            <person name="Bennett K.L."/>
            <person name="Superti-Furga G."/>
            <person name="Colinge J."/>
        </authorList>
    </citation>
    <scope>IDENTIFICATION BY MASS SPECTROMETRY [LARGE SCALE ANALYSIS]</scope>
</reference>
<reference key="20">
    <citation type="journal article" date="2013" name="J. Proteome Res.">
        <title>Toward a comprehensive characterization of a human cancer cell phosphoproteome.</title>
        <authorList>
            <person name="Zhou H."/>
            <person name="Di Palma S."/>
            <person name="Preisinger C."/>
            <person name="Peng M."/>
            <person name="Polat A.N."/>
            <person name="Heck A.J."/>
            <person name="Mohammed S."/>
        </authorList>
    </citation>
    <scope>PHOSPHORYLATION [LARGE SCALE ANALYSIS] AT SER-725</scope>
    <scope>IDENTIFICATION BY MASS SPECTROMETRY [LARGE SCALE ANALYSIS]</scope>
    <source>
        <tissue>Cervix carcinoma</tissue>
        <tissue>Erythroleukemia</tissue>
    </source>
</reference>
<reference key="21">
    <citation type="journal article" date="2015" name="Proteomics">
        <title>N-terminome analysis of the human mitochondrial proteome.</title>
        <authorList>
            <person name="Vaca Jacome A.S."/>
            <person name="Rabilloud T."/>
            <person name="Schaeffer-Reiss C."/>
            <person name="Rompais M."/>
            <person name="Ayoub D."/>
            <person name="Lane L."/>
            <person name="Bairoch A."/>
            <person name="Van Dorsselaer A."/>
            <person name="Carapito C."/>
        </authorList>
    </citation>
    <scope>IDENTIFICATION BY MASS SPECTROMETRY [LARGE SCALE ANALYSIS]</scope>
</reference>
<reference key="22">
    <citation type="journal article" date="2018" name="Nat. Commun.">
        <title>Dedicated surveillance mechanism controls G-quadruplex forming non-coding RNAs in human mitochondria.</title>
        <authorList>
            <person name="Pietras Z."/>
            <person name="Wojcik M.A."/>
            <person name="Borowski L.S."/>
            <person name="Szewczyk M."/>
            <person name="Kulinski T.M."/>
            <person name="Cysewski D."/>
            <person name="Stepien P.P."/>
            <person name="Dziembowski A."/>
            <person name="Szczesny R.J."/>
        </authorList>
    </citation>
    <scope>FUNCTION</scope>
    <scope>IDENTIFICATION IN THE MITOCHONDRIAL DEGRADOSOME COMPLEX</scope>
    <scope>INTERACTION WITH GRSF1</scope>
</reference>
<comment type="function">
    <text evidence="6 9 11 12 14 15 16 17">Major helicase player in mitochondrial RNA metabolism. Component of the mitochondrial degradosome (mtEXO) complex, that degrades 3' overhang double-stranded RNA with a 3'-to-5' directionality in an ATP-dependent manner. Involved in the degradation of non-coding mitochondrial transcripts (MT-ncRNA) and tRNA-like molecules (PubMed:29967381). ATPase and ATP-dependent multisubstrate helicase, able to unwind double-stranded (ds) DNA and RNA, and RNA/DNA heteroduplexes in the 5'-to-3' direction. Plays a role in the RNA surveillance system in mitochondria; regulates the stability of mature mRNAs, the removal of aberrantly formed mRNAs and the rapid degradation of non coding processing intermediates. Also implicated in recombination and chromatin maintenance pathways. May protect cells from apoptosis. Associates with mitochondrial DNA.</text>
</comment>
<comment type="catalytic activity">
    <reaction evidence="6">
        <text>ATP + H2O = ADP + phosphate + H(+)</text>
        <dbReference type="Rhea" id="RHEA:13065"/>
        <dbReference type="ChEBI" id="CHEBI:15377"/>
        <dbReference type="ChEBI" id="CHEBI:15378"/>
        <dbReference type="ChEBI" id="CHEBI:30616"/>
        <dbReference type="ChEBI" id="CHEBI:43474"/>
        <dbReference type="ChEBI" id="CHEBI:456216"/>
        <dbReference type="EC" id="3.6.4.13"/>
    </reaction>
</comment>
<comment type="cofactor">
    <cofactor evidence="9">
        <name>Mg(2+)</name>
        <dbReference type="ChEBI" id="CHEBI:18420"/>
    </cofactor>
    <cofactor evidence="9">
        <name>Mn(2+)</name>
        <dbReference type="ChEBI" id="CHEBI:29035"/>
    </cofactor>
</comment>
<comment type="activity regulation">
    <text evidence="7 8">Helicase activity toward DNA substrate is inhibited by micromolar concentrations of 5,6-dichloro-1-(beta-D-ribofuranosyl)benzotriazole (DRBT) and 4,5,6,7-tetrabromobenzotriazole (TBBT). Helicase activity toward RNA substrate is inhibited by elevated concentrations of TBBT. Inhibited by some ring-expanded nucleoside analogs.</text>
</comment>
<comment type="biophysicochemical properties">
    <kinetics>
        <KM evidence="6 9">41.9 uM for ATP</KM>
    </kinetics>
    <phDependence>
        <text evidence="6 9">Optimum pH is 5.0.</text>
    </phDependence>
    <temperatureDependence>
        <text evidence="6 9">Optimum temperature is 30 degrees Celsius.</text>
    </temperatureDependence>
</comment>
<comment type="subunit">
    <text evidence="10 12 15 17">Homodimer; in free form (PubMed:19509288). Component of the mitochondrial degradosome (mtEXO) complex which is a heteropentamer containing 2 copies of SUPV3L1 and 3 copies of PNPT1 (PubMed:19509288, PubMed:29967381). As part of mitochondrial degradosome complex, interacts with GRSF1 in a RNA-dependent manner; the interaction enhances the activity of the complex (PubMed:29967381). Interacts with LAMTOR5/HBXIP, WRN and BLM (PubMed:16176273, PubMed:17961633).</text>
</comment>
<comment type="interaction">
    <interactant intactId="EBI-2876787">
        <id>Q8IYB8</id>
    </interactant>
    <interactant intactId="EBI-741037">
        <id>Q9BRK4</id>
        <label>LZTS2</label>
    </interactant>
    <organismsDiffer>false</organismsDiffer>
    <experiments>3</experiments>
</comment>
<comment type="interaction">
    <interactant intactId="EBI-2876787">
        <id>Q8IYB8</id>
    </interactant>
    <interactant intactId="EBI-6447163">
        <id>Q8N7X4</id>
        <label>MAGEB6</label>
    </interactant>
    <organismsDiffer>false</organismsDiffer>
    <experiments>3</experiments>
</comment>
<comment type="interaction">
    <interactant intactId="EBI-2876787">
        <id>Q8IYB8</id>
    </interactant>
    <interactant intactId="EBI-1052020">
        <id>Q8TCS8</id>
        <label>PNPT1</label>
    </interactant>
    <organismsDiffer>false</organismsDiffer>
    <experiments>9</experiments>
</comment>
<comment type="interaction">
    <interactant intactId="EBI-2876787">
        <id>Q8IYB8</id>
    </interactant>
    <interactant intactId="EBI-2876787">
        <id>Q8IYB8</id>
        <label>SUPV3L1</label>
    </interactant>
    <organismsDiffer>false</organismsDiffer>
    <experiments>3</experiments>
</comment>
<comment type="subcellular location">
    <subcellularLocation>
        <location evidence="11">Nucleus</location>
    </subcellularLocation>
    <subcellularLocation>
        <location evidence="6 11 16">Mitochondrion matrix</location>
    </subcellularLocation>
    <subcellularLocation>
        <location evidence="13">Mitochondrion matrix</location>
        <location evidence="13">Mitochondrion nucleoid</location>
    </subcellularLocation>
</comment>
<comment type="tissue specificity">
    <text evidence="5">Broadly expressed.</text>
</comment>
<comment type="similarity">
    <text evidence="18">Belongs to the helicase family.</text>
</comment>
<feature type="transit peptide" description="Mitochondrion" evidence="1">
    <location>
        <begin position="1"/>
        <end position="22"/>
    </location>
</feature>
<feature type="chain" id="PRO_0000310545" description="ATP-dependent RNA helicase SUPV3L1, mitochondrial">
    <location>
        <begin position="23"/>
        <end position="786"/>
    </location>
</feature>
<feature type="domain" description="Helicase ATP-binding">
    <location>
        <begin position="194"/>
        <end position="334"/>
    </location>
</feature>
<feature type="domain" description="Helicase C-terminal" evidence="3">
    <location>
        <begin position="353"/>
        <end position="518"/>
    </location>
</feature>
<feature type="region of interest" description="Interaction with LAMTOR5, important for protein stability" evidence="10">
    <location>
        <begin position="650"/>
        <end position="786"/>
    </location>
</feature>
<feature type="region of interest" description="Disordered" evidence="4">
    <location>
        <begin position="690"/>
        <end position="730"/>
    </location>
</feature>
<feature type="region of interest" description="Disordered" evidence="4">
    <location>
        <begin position="749"/>
        <end position="786"/>
    </location>
</feature>
<feature type="compositionally biased region" description="Polar residues" evidence="4">
    <location>
        <begin position="693"/>
        <end position="705"/>
    </location>
</feature>
<feature type="compositionally biased region" description="Basic and acidic residues" evidence="4">
    <location>
        <begin position="749"/>
        <end position="771"/>
    </location>
</feature>
<feature type="binding site" evidence="2">
    <location>
        <begin position="207"/>
        <end position="214"/>
    </location>
    <ligand>
        <name>ATP</name>
        <dbReference type="ChEBI" id="CHEBI:30616"/>
    </ligand>
</feature>
<feature type="modified residue" description="N6-acetyllysine" evidence="20">
    <location>
        <position position="99"/>
    </location>
</feature>
<feature type="modified residue" description="N6-acetyllysine" evidence="20">
    <location>
        <position position="220"/>
    </location>
</feature>
<feature type="modified residue" description="Phosphoserine" evidence="19 21">
    <location>
        <position position="725"/>
    </location>
</feature>
<feature type="sequence variant" id="VAR_061214" description="In dbSNP:rs33998366.">
    <original>S</original>
    <variation>F</variation>
    <location>
        <position position="2"/>
    </location>
</feature>
<feature type="sequence variant" id="VAR_037076" description="In dbSNP:rs34596380.">
    <original>P</original>
    <variation>T</variation>
    <location>
        <position position="30"/>
    </location>
</feature>
<feature type="mutagenesis site" description="Abolishes ATPase and dsDNA and dsRNA helicase activities." evidence="6">
    <original>G</original>
    <variation>V</variation>
    <location>
        <position position="207"/>
    </location>
</feature>
<feature type="mutagenesis site" description="Abolishes ATPase activity. Abolishes helicase activity and reduces double-stranded RNA degradation. Does not abolish formation of the mitochondrial RNA-degrading complex." evidence="9 15">
    <original>K</original>
    <variation>A</variation>
    <variation>R</variation>
    <location>
        <position position="213"/>
    </location>
</feature>
<feature type="mutagenesis site" description="Does not abolish ATPase activity. Shows a loss of double-stranded RNA-binding, helicase and degrading activities." evidence="15">
    <location>
        <begin position="576"/>
        <end position="581"/>
    </location>
</feature>
<feature type="sequence conflict" description="In Ref. 1; AAB97370." evidence="18" ref="1">
    <original>KL</original>
    <variation>TS</variation>
    <location>
        <begin position="234"/>
        <end position="235"/>
    </location>
</feature>
<feature type="sequence conflict" description="In Ref. 1; AAB97370." evidence="18" ref="1">
    <original>V</original>
    <variation>E</variation>
    <location>
        <position position="254"/>
    </location>
</feature>
<feature type="helix" evidence="22">
    <location>
        <begin position="61"/>
        <end position="63"/>
    </location>
</feature>
<feature type="helix" evidence="22">
    <location>
        <begin position="90"/>
        <end position="102"/>
    </location>
</feature>
<feature type="helix" evidence="22">
    <location>
        <begin position="104"/>
        <end position="112"/>
    </location>
</feature>
<feature type="helix" evidence="22">
    <location>
        <begin position="117"/>
        <end position="133"/>
    </location>
</feature>
<feature type="helix" evidence="22">
    <location>
        <begin position="139"/>
        <end position="149"/>
    </location>
</feature>
<feature type="helix" evidence="22">
    <location>
        <begin position="155"/>
        <end position="158"/>
    </location>
</feature>
<feature type="helix" evidence="22">
    <location>
        <begin position="159"/>
        <end position="169"/>
    </location>
</feature>
<feature type="helix" evidence="22">
    <location>
        <begin position="171"/>
        <end position="174"/>
    </location>
</feature>
<feature type="helix" evidence="22">
    <location>
        <begin position="176"/>
        <end position="182"/>
    </location>
</feature>
<feature type="helix" evidence="22">
    <location>
        <begin position="188"/>
        <end position="191"/>
    </location>
</feature>
<feature type="helix" evidence="22">
    <location>
        <begin position="193"/>
        <end position="196"/>
    </location>
</feature>
<feature type="strand" evidence="22">
    <location>
        <begin position="201"/>
        <end position="206"/>
    </location>
</feature>
<feature type="strand" evidence="23">
    <location>
        <begin position="208"/>
        <end position="212"/>
    </location>
</feature>
<feature type="helix" evidence="22">
    <location>
        <begin position="213"/>
        <end position="223"/>
    </location>
</feature>
<feature type="strand" evidence="22">
    <location>
        <begin position="224"/>
        <end position="233"/>
    </location>
</feature>
<feature type="helix" evidence="22">
    <location>
        <begin position="234"/>
        <end position="246"/>
    </location>
</feature>
<feature type="strand" evidence="22">
    <location>
        <begin position="251"/>
        <end position="254"/>
    </location>
</feature>
<feature type="strand" evidence="23">
    <location>
        <begin position="263"/>
        <end position="266"/>
    </location>
</feature>
<feature type="strand" evidence="22">
    <location>
        <begin position="270"/>
        <end position="275"/>
    </location>
</feature>
<feature type="helix" evidence="22">
    <location>
        <begin position="276"/>
        <end position="278"/>
    </location>
</feature>
<feature type="strand" evidence="22">
    <location>
        <begin position="281"/>
        <end position="283"/>
    </location>
</feature>
<feature type="strand" evidence="22">
    <location>
        <begin position="285"/>
        <end position="290"/>
    </location>
</feature>
<feature type="helix" evidence="22">
    <location>
        <begin position="293"/>
        <end position="297"/>
    </location>
</feature>
<feature type="turn" evidence="22">
    <location>
        <begin position="299"/>
        <end position="301"/>
    </location>
</feature>
<feature type="helix" evidence="22">
    <location>
        <begin position="302"/>
        <end position="311"/>
    </location>
</feature>
<feature type="strand" evidence="22">
    <location>
        <begin position="314"/>
        <end position="321"/>
    </location>
</feature>
<feature type="helix" evidence="22">
    <location>
        <begin position="323"/>
        <end position="325"/>
    </location>
</feature>
<feature type="helix" evidence="22">
    <location>
        <begin position="326"/>
        <end position="336"/>
    </location>
</feature>
<feature type="strand" evidence="22">
    <location>
        <begin position="340"/>
        <end position="344"/>
    </location>
</feature>
<feature type="strand" evidence="22">
    <location>
        <begin position="351"/>
        <end position="353"/>
    </location>
</feature>
<feature type="helix" evidence="22">
    <location>
        <begin position="361"/>
        <end position="363"/>
    </location>
</feature>
<feature type="strand" evidence="22">
    <location>
        <begin position="368"/>
        <end position="371"/>
    </location>
</feature>
<feature type="helix" evidence="22">
    <location>
        <begin position="375"/>
        <end position="387"/>
    </location>
</feature>
<feature type="strand" evidence="22">
    <location>
        <begin position="393"/>
        <end position="395"/>
    </location>
</feature>
<feature type="helix" evidence="22">
    <location>
        <begin position="401"/>
        <end position="412"/>
    </location>
</feature>
<feature type="strand" evidence="22">
    <location>
        <begin position="420"/>
        <end position="423"/>
    </location>
</feature>
<feature type="helix" evidence="22">
    <location>
        <begin position="425"/>
        <end position="428"/>
    </location>
</feature>
<feature type="strand" evidence="22">
    <location>
        <begin position="435"/>
        <end position="441"/>
    </location>
</feature>
<feature type="helix" evidence="22">
    <location>
        <begin position="461"/>
        <end position="468"/>
    </location>
</feature>
<feature type="turn" evidence="23">
    <location>
        <begin position="475"/>
        <end position="477"/>
    </location>
</feature>
<feature type="strand" evidence="22">
    <location>
        <begin position="479"/>
        <end position="487"/>
    </location>
</feature>
<feature type="helix" evidence="22">
    <location>
        <begin position="490"/>
        <end position="499"/>
    </location>
</feature>
<feature type="strand" evidence="22">
    <location>
        <begin position="508"/>
        <end position="510"/>
    </location>
</feature>
<feature type="helix" evidence="22">
    <location>
        <begin position="514"/>
        <end position="523"/>
    </location>
</feature>
<feature type="helix" evidence="22">
    <location>
        <begin position="529"/>
        <end position="539"/>
    </location>
</feature>
<feature type="strand" evidence="22">
    <location>
        <begin position="546"/>
        <end position="548"/>
    </location>
</feature>
<feature type="helix" evidence="22">
    <location>
        <begin position="552"/>
        <end position="560"/>
    </location>
</feature>
<feature type="turn" evidence="22">
    <location>
        <begin position="561"/>
        <end position="563"/>
    </location>
</feature>
<feature type="helix" evidence="22">
    <location>
        <begin position="568"/>
        <end position="576"/>
    </location>
</feature>
<feature type="helix" evidence="22">
    <location>
        <begin position="584"/>
        <end position="598"/>
    </location>
</feature>
<feature type="helix" evidence="22">
    <location>
        <begin position="605"/>
        <end position="611"/>
    </location>
</feature>
<feature type="helix" evidence="22">
    <location>
        <begin position="622"/>
        <end position="642"/>
    </location>
</feature>
<feature type="turn" evidence="22">
    <location>
        <begin position="646"/>
        <end position="648"/>
    </location>
</feature>
<feature type="helix" evidence="22">
    <location>
        <begin position="652"/>
        <end position="671"/>
    </location>
</feature>
<feature type="helix" evidence="22">
    <location>
        <begin position="673"/>
        <end position="682"/>
    </location>
</feature>
<keyword id="KW-0002">3D-structure</keyword>
<keyword id="KW-0007">Acetylation</keyword>
<keyword id="KW-0067">ATP-binding</keyword>
<keyword id="KW-0347">Helicase</keyword>
<keyword id="KW-0378">Hydrolase</keyword>
<keyword id="KW-0496">Mitochondrion</keyword>
<keyword id="KW-1135">Mitochondrion nucleoid</keyword>
<keyword id="KW-0547">Nucleotide-binding</keyword>
<keyword id="KW-0539">Nucleus</keyword>
<keyword id="KW-0597">Phosphoprotein</keyword>
<keyword id="KW-1267">Proteomics identification</keyword>
<keyword id="KW-1185">Reference proteome</keyword>
<keyword id="KW-0809">Transit peptide</keyword>
<proteinExistence type="evidence at protein level"/>
<organism>
    <name type="scientific">Homo sapiens</name>
    <name type="common">Human</name>
    <dbReference type="NCBI Taxonomy" id="9606"/>
    <lineage>
        <taxon>Eukaryota</taxon>
        <taxon>Metazoa</taxon>
        <taxon>Chordata</taxon>
        <taxon>Craniata</taxon>
        <taxon>Vertebrata</taxon>
        <taxon>Euteleostomi</taxon>
        <taxon>Mammalia</taxon>
        <taxon>Eutheria</taxon>
        <taxon>Euarchontoglires</taxon>
        <taxon>Primates</taxon>
        <taxon>Haplorrhini</taxon>
        <taxon>Catarrhini</taxon>
        <taxon>Hominidae</taxon>
        <taxon>Homo</taxon>
    </lineage>
</organism>
<dbReference type="EC" id="3.6.4.13" evidence="6"/>
<dbReference type="EMBL" id="AF042169">
    <property type="protein sequence ID" value="AAB97370.1"/>
    <property type="molecule type" value="mRNA"/>
</dbReference>
<dbReference type="EMBL" id="AK290416">
    <property type="protein sequence ID" value="BAF83105.1"/>
    <property type="molecule type" value="mRNA"/>
</dbReference>
<dbReference type="EMBL" id="AL596223">
    <property type="status" value="NOT_ANNOTATED_CDS"/>
    <property type="molecule type" value="Genomic_DNA"/>
</dbReference>
<dbReference type="EMBL" id="CH471083">
    <property type="protein sequence ID" value="EAW54314.1"/>
    <property type="molecule type" value="Genomic_DNA"/>
</dbReference>
<dbReference type="EMBL" id="BC036112">
    <property type="protein sequence ID" value="AAH36112.1"/>
    <property type="molecule type" value="mRNA"/>
</dbReference>
<dbReference type="CCDS" id="CCDS7287.1"/>
<dbReference type="RefSeq" id="NP_001288612.1">
    <property type="nucleotide sequence ID" value="NM_001301683.1"/>
</dbReference>
<dbReference type="RefSeq" id="NP_003162.2">
    <property type="nucleotide sequence ID" value="NM_003171.4"/>
</dbReference>
<dbReference type="PDB" id="3RC3">
    <property type="method" value="X-ray"/>
    <property type="resolution" value="2.08 A"/>
    <property type="chains" value="A=47-722"/>
</dbReference>
<dbReference type="PDB" id="3RC8">
    <property type="method" value="X-ray"/>
    <property type="resolution" value="2.90 A"/>
    <property type="chains" value="A=47-722"/>
</dbReference>
<dbReference type="PDB" id="7W1R">
    <property type="method" value="X-ray"/>
    <property type="resolution" value="3.20 A"/>
    <property type="chains" value="A=49-722"/>
</dbReference>
<dbReference type="PDBsum" id="3RC3"/>
<dbReference type="PDBsum" id="3RC8"/>
<dbReference type="PDBsum" id="7W1R"/>
<dbReference type="SMR" id="Q8IYB8"/>
<dbReference type="BioGRID" id="112699">
    <property type="interactions" value="144"/>
</dbReference>
<dbReference type="ComplexPortal" id="CPX-2842">
    <property type="entry name" value="Mitochondrial degradosome complex"/>
</dbReference>
<dbReference type="FunCoup" id="Q8IYB8">
    <property type="interactions" value="2686"/>
</dbReference>
<dbReference type="IntAct" id="Q8IYB8">
    <property type="interactions" value="557"/>
</dbReference>
<dbReference type="MINT" id="Q8IYB8"/>
<dbReference type="STRING" id="9606.ENSP00000352678"/>
<dbReference type="BindingDB" id="Q8IYB8"/>
<dbReference type="ChEMBL" id="CHEMBL3642"/>
<dbReference type="GlyGen" id="Q8IYB8">
    <property type="glycosylation" value="1 site, 1 O-linked glycan (1 site)"/>
</dbReference>
<dbReference type="iPTMnet" id="Q8IYB8"/>
<dbReference type="PhosphoSitePlus" id="Q8IYB8"/>
<dbReference type="SwissPalm" id="Q8IYB8"/>
<dbReference type="BioMuta" id="SUPV3L1"/>
<dbReference type="DMDM" id="74759699"/>
<dbReference type="jPOST" id="Q8IYB8"/>
<dbReference type="MassIVE" id="Q8IYB8"/>
<dbReference type="PaxDb" id="9606-ENSP00000352678"/>
<dbReference type="PeptideAtlas" id="Q8IYB8"/>
<dbReference type="ProteomicsDB" id="71153"/>
<dbReference type="Pumba" id="Q8IYB8"/>
<dbReference type="Antibodypedia" id="28732">
    <property type="antibodies" value="136 antibodies from 27 providers"/>
</dbReference>
<dbReference type="DNASU" id="6832"/>
<dbReference type="Ensembl" id="ENST00000359655.9">
    <property type="protein sequence ID" value="ENSP00000352678.4"/>
    <property type="gene ID" value="ENSG00000156502.14"/>
</dbReference>
<dbReference type="GeneID" id="6832"/>
<dbReference type="KEGG" id="hsa:6832"/>
<dbReference type="MANE-Select" id="ENST00000359655.9">
    <property type="protein sequence ID" value="ENSP00000352678.4"/>
    <property type="RefSeq nucleotide sequence ID" value="NM_003171.5"/>
    <property type="RefSeq protein sequence ID" value="NP_003162.2"/>
</dbReference>
<dbReference type="UCSC" id="uc001jpe.2">
    <property type="organism name" value="human"/>
</dbReference>
<dbReference type="AGR" id="HGNC:11471"/>
<dbReference type="CTD" id="6832"/>
<dbReference type="DisGeNET" id="6832"/>
<dbReference type="GeneCards" id="SUPV3L1"/>
<dbReference type="HGNC" id="HGNC:11471">
    <property type="gene designation" value="SUPV3L1"/>
</dbReference>
<dbReference type="HPA" id="ENSG00000156502">
    <property type="expression patterns" value="Low tissue specificity"/>
</dbReference>
<dbReference type="MIM" id="605122">
    <property type="type" value="gene"/>
</dbReference>
<dbReference type="neXtProt" id="NX_Q8IYB8"/>
<dbReference type="OpenTargets" id="ENSG00000156502"/>
<dbReference type="PharmGKB" id="PA36257"/>
<dbReference type="VEuPathDB" id="HostDB:ENSG00000156502"/>
<dbReference type="eggNOG" id="KOG0953">
    <property type="taxonomic scope" value="Eukaryota"/>
</dbReference>
<dbReference type="GeneTree" id="ENSGT00390000003100"/>
<dbReference type="HOGENOM" id="CLU_010647_3_2_1"/>
<dbReference type="InParanoid" id="Q8IYB8"/>
<dbReference type="OMA" id="QPANWYT"/>
<dbReference type="OrthoDB" id="6692397at2759"/>
<dbReference type="PAN-GO" id="Q8IYB8">
    <property type="GO annotations" value="4 GO annotations based on evolutionary models"/>
</dbReference>
<dbReference type="PhylomeDB" id="Q8IYB8"/>
<dbReference type="TreeFam" id="TF106432"/>
<dbReference type="PathwayCommons" id="Q8IYB8"/>
<dbReference type="Reactome" id="R-HSA-9836573">
    <property type="pathway name" value="Mitochondrial RNA degradation"/>
</dbReference>
<dbReference type="SignaLink" id="Q8IYB8"/>
<dbReference type="BioGRID-ORCS" id="6832">
    <property type="hits" value="697 hits in 1184 CRISPR screens"/>
</dbReference>
<dbReference type="CD-CODE" id="5965E019">
    <property type="entry name" value="mtRNA granule"/>
</dbReference>
<dbReference type="ChiTaRS" id="SUPV3L1">
    <property type="organism name" value="human"/>
</dbReference>
<dbReference type="EvolutionaryTrace" id="Q8IYB8"/>
<dbReference type="GeneWiki" id="SUPV3L1"/>
<dbReference type="GenomeRNAi" id="6832"/>
<dbReference type="Pharos" id="Q8IYB8">
    <property type="development level" value="Tbio"/>
</dbReference>
<dbReference type="PRO" id="PR:Q8IYB8"/>
<dbReference type="Proteomes" id="UP000005640">
    <property type="component" value="Chromosome 10"/>
</dbReference>
<dbReference type="RNAct" id="Q8IYB8">
    <property type="molecule type" value="protein"/>
</dbReference>
<dbReference type="Bgee" id="ENSG00000156502">
    <property type="expression patterns" value="Expressed in oocyte and 200 other cell types or tissues"/>
</dbReference>
<dbReference type="ExpressionAtlas" id="Q8IYB8">
    <property type="expression patterns" value="baseline and differential"/>
</dbReference>
<dbReference type="GO" id="GO:0045025">
    <property type="term" value="C:mitochondrial degradosome"/>
    <property type="evidence" value="ECO:0000314"/>
    <property type="project" value="UniProtKB"/>
</dbReference>
<dbReference type="GO" id="GO:0005759">
    <property type="term" value="C:mitochondrial matrix"/>
    <property type="evidence" value="ECO:0000314"/>
    <property type="project" value="UniProtKB"/>
</dbReference>
<dbReference type="GO" id="GO:0042645">
    <property type="term" value="C:mitochondrial nucleoid"/>
    <property type="evidence" value="ECO:0000314"/>
    <property type="project" value="BHF-UCL"/>
</dbReference>
<dbReference type="GO" id="GO:0005739">
    <property type="term" value="C:mitochondrion"/>
    <property type="evidence" value="ECO:0000314"/>
    <property type="project" value="UniProtKB"/>
</dbReference>
<dbReference type="GO" id="GO:0005634">
    <property type="term" value="C:nucleus"/>
    <property type="evidence" value="ECO:0000314"/>
    <property type="project" value="UniProtKB"/>
</dbReference>
<dbReference type="GO" id="GO:0034458">
    <property type="term" value="F:3'-5' RNA helicase activity"/>
    <property type="evidence" value="ECO:0000314"/>
    <property type="project" value="UniProtKB"/>
</dbReference>
<dbReference type="GO" id="GO:0005524">
    <property type="term" value="F:ATP binding"/>
    <property type="evidence" value="ECO:0007669"/>
    <property type="project" value="UniProtKB-KW"/>
</dbReference>
<dbReference type="GO" id="GO:0016887">
    <property type="term" value="F:ATP hydrolysis activity"/>
    <property type="evidence" value="ECO:0007669"/>
    <property type="project" value="RHEA"/>
</dbReference>
<dbReference type="GO" id="GO:0003677">
    <property type="term" value="F:DNA binding"/>
    <property type="evidence" value="ECO:0000315"/>
    <property type="project" value="UniProtKB"/>
</dbReference>
<dbReference type="GO" id="GO:0003678">
    <property type="term" value="F:DNA helicase activity"/>
    <property type="evidence" value="ECO:0000315"/>
    <property type="project" value="UniProtKB"/>
</dbReference>
<dbReference type="GO" id="GO:0003725">
    <property type="term" value="F:double-stranded RNA binding"/>
    <property type="evidence" value="ECO:0000314"/>
    <property type="project" value="UniProtKB"/>
</dbReference>
<dbReference type="GO" id="GO:0004386">
    <property type="term" value="F:helicase activity"/>
    <property type="evidence" value="ECO:0000304"/>
    <property type="project" value="ProtInc"/>
</dbReference>
<dbReference type="GO" id="GO:0042802">
    <property type="term" value="F:identical protein binding"/>
    <property type="evidence" value="ECO:0000353"/>
    <property type="project" value="IntAct"/>
</dbReference>
<dbReference type="GO" id="GO:0042803">
    <property type="term" value="F:protein homodimerization activity"/>
    <property type="evidence" value="ECO:0000353"/>
    <property type="project" value="UniProtKB"/>
</dbReference>
<dbReference type="GO" id="GO:0003723">
    <property type="term" value="F:RNA binding"/>
    <property type="evidence" value="ECO:0007005"/>
    <property type="project" value="UniProtKB"/>
</dbReference>
<dbReference type="GO" id="GO:0003724">
    <property type="term" value="F:RNA helicase activity"/>
    <property type="evidence" value="ECO:0000314"/>
    <property type="project" value="UniProtKB"/>
</dbReference>
<dbReference type="GO" id="GO:0006310">
    <property type="term" value="P:DNA recombination"/>
    <property type="evidence" value="ECO:0000315"/>
    <property type="project" value="UniProtKB"/>
</dbReference>
<dbReference type="GO" id="GO:0000958">
    <property type="term" value="P:mitochondrial mRNA catabolic process"/>
    <property type="evidence" value="ECO:0000315"/>
    <property type="project" value="UniProtKB"/>
</dbReference>
<dbReference type="GO" id="GO:0035946">
    <property type="term" value="P:mitochondrial mRNA surveillance"/>
    <property type="evidence" value="ECO:0000315"/>
    <property type="project" value="UniProtKB"/>
</dbReference>
<dbReference type="GO" id="GO:0035945">
    <property type="term" value="P:mitochondrial ncRNA surveillance"/>
    <property type="evidence" value="ECO:0000315"/>
    <property type="project" value="UniProtKB"/>
</dbReference>
<dbReference type="GO" id="GO:0000965">
    <property type="term" value="P:mitochondrial RNA 3'-end processing"/>
    <property type="evidence" value="ECO:0000315"/>
    <property type="project" value="UniProtKB"/>
</dbReference>
<dbReference type="GO" id="GO:0000957">
    <property type="term" value="P:mitochondrial RNA catabolic process"/>
    <property type="evidence" value="ECO:0000304"/>
    <property type="project" value="Reactome"/>
</dbReference>
<dbReference type="GO" id="GO:2000827">
    <property type="term" value="P:mitochondrial RNA surveillance"/>
    <property type="evidence" value="ECO:0000315"/>
    <property type="project" value="UniProtKB"/>
</dbReference>
<dbReference type="GO" id="GO:0007005">
    <property type="term" value="P:mitochondrion organization"/>
    <property type="evidence" value="ECO:0000315"/>
    <property type="project" value="UniProtKB"/>
</dbReference>
<dbReference type="GO" id="GO:0043066">
    <property type="term" value="P:negative regulation of apoptotic process"/>
    <property type="evidence" value="ECO:0000315"/>
    <property type="project" value="UniProtKB"/>
</dbReference>
<dbReference type="GO" id="GO:0030307">
    <property type="term" value="P:positive regulation of cell growth"/>
    <property type="evidence" value="ECO:0000315"/>
    <property type="project" value="UniProtKB"/>
</dbReference>
<dbReference type="GO" id="GO:0000962">
    <property type="term" value="P:positive regulation of mitochondrial RNA catabolic process"/>
    <property type="evidence" value="ECO:0000314"/>
    <property type="project" value="UniProtKB"/>
</dbReference>
<dbReference type="GO" id="GO:0006401">
    <property type="term" value="P:RNA catabolic process"/>
    <property type="evidence" value="ECO:0000315"/>
    <property type="project" value="UniProtKB"/>
</dbReference>
<dbReference type="CDD" id="cd17913">
    <property type="entry name" value="DEXQc_Suv3"/>
    <property type="match status" value="1"/>
</dbReference>
<dbReference type="CDD" id="cd18805">
    <property type="entry name" value="SF2_C_suv3"/>
    <property type="match status" value="1"/>
</dbReference>
<dbReference type="FunFam" id="1.10.1740.140:FF:000001">
    <property type="entry name" value="ATP-dependent RNA helicase SUPV3L1, mitochondrial"/>
    <property type="match status" value="1"/>
</dbReference>
<dbReference type="FunFam" id="1.20.58.1080:FF:000001">
    <property type="entry name" value="ATP-dependent RNA helicase SUPV3L1, mitochondrial"/>
    <property type="match status" value="1"/>
</dbReference>
<dbReference type="FunFam" id="3.40.50.300:FF:000269">
    <property type="entry name" value="ATP-dependent RNA helicase SUPV3L1, mitochondrial"/>
    <property type="match status" value="1"/>
</dbReference>
<dbReference type="FunFam" id="3.40.50.300:FF:000446">
    <property type="entry name" value="ATP-dependent RNA helicase SUPV3L1, mitochondrial"/>
    <property type="match status" value="1"/>
</dbReference>
<dbReference type="Gene3D" id="1.10.1740.140">
    <property type="match status" value="1"/>
</dbReference>
<dbReference type="Gene3D" id="1.20.272.40">
    <property type="match status" value="1"/>
</dbReference>
<dbReference type="Gene3D" id="1.20.58.1080">
    <property type="match status" value="1"/>
</dbReference>
<dbReference type="Gene3D" id="3.40.50.300">
    <property type="entry name" value="P-loop containing nucleotide triphosphate hydrolases"/>
    <property type="match status" value="2"/>
</dbReference>
<dbReference type="InterPro" id="IPR055206">
    <property type="entry name" value="DEXQc_SUV3"/>
</dbReference>
<dbReference type="InterPro" id="IPR001650">
    <property type="entry name" value="Helicase_C-like"/>
</dbReference>
<dbReference type="InterPro" id="IPR027417">
    <property type="entry name" value="P-loop_NTPase"/>
</dbReference>
<dbReference type="InterPro" id="IPR050699">
    <property type="entry name" value="RNA-DNA_Helicase"/>
</dbReference>
<dbReference type="InterPro" id="IPR022192">
    <property type="entry name" value="SUV3_C"/>
</dbReference>
<dbReference type="InterPro" id="IPR041082">
    <property type="entry name" value="Suv3_C_1"/>
</dbReference>
<dbReference type="InterPro" id="IPR044774">
    <property type="entry name" value="Suv3_DEXQc"/>
</dbReference>
<dbReference type="InterPro" id="IPR041453">
    <property type="entry name" value="Suv3_N"/>
</dbReference>
<dbReference type="PANTHER" id="PTHR12131">
    <property type="entry name" value="ATP-DEPENDENT RNA AND DNA HELICASE"/>
    <property type="match status" value="1"/>
</dbReference>
<dbReference type="PANTHER" id="PTHR12131:SF1">
    <property type="entry name" value="ATP-DEPENDENT RNA HELICASE SUPV3L1, MITOCHONDRIAL-RELATED"/>
    <property type="match status" value="1"/>
</dbReference>
<dbReference type="Pfam" id="PF22527">
    <property type="entry name" value="DEXQc_Suv3"/>
    <property type="match status" value="1"/>
</dbReference>
<dbReference type="Pfam" id="PF00271">
    <property type="entry name" value="Helicase_C"/>
    <property type="match status" value="1"/>
</dbReference>
<dbReference type="Pfam" id="PF12513">
    <property type="entry name" value="SUV3_C"/>
    <property type="match status" value="1"/>
</dbReference>
<dbReference type="Pfam" id="PF18147">
    <property type="entry name" value="Suv3_C_1"/>
    <property type="match status" value="1"/>
</dbReference>
<dbReference type="Pfam" id="PF18114">
    <property type="entry name" value="Suv3_N"/>
    <property type="match status" value="1"/>
</dbReference>
<dbReference type="SMART" id="SM00490">
    <property type="entry name" value="HELICc"/>
    <property type="match status" value="1"/>
</dbReference>
<dbReference type="SUPFAM" id="SSF52540">
    <property type="entry name" value="P-loop containing nucleoside triphosphate hydrolases"/>
    <property type="match status" value="2"/>
</dbReference>
<dbReference type="PROSITE" id="PS51194">
    <property type="entry name" value="HELICASE_CTER"/>
    <property type="match status" value="1"/>
</dbReference>
<sequence length="786" mass="87991">MSFSRALLWARLPAGRQAGHRAAICSALRPHFGPFPGVLGQVSVLATASSSASGGSKIPNTSLFVPLTVKPQGPSADGDVGAELTRPLDKNEVKKVLDKFYKRKEIQKLGADYGLDARLFHQAFISFRNYIMQSHSLDVDIHIVLNDICFGAAHADDLFPFFLRHAKQIFPVLDCKDDLRKISDLRIPPNWYPDARAMQRKIIFHSGPTNSGKTYHAIQKYFSAKSGVYCGPLKLLAHEIFEKSNAAGVPCDLVTGEERVTVQPNGKQASHVSCTVEMCSVTTPYEVAVIDEIQMIRDPARGWAWTRALLGLCAEEVHLCGEPAAIDLVMELMYTTGEEVEVRDYKRLTPISVLDHALESLDNLRPGDCIVCFSKNDIYSVSRQIEIRGLESAVIYGSLPPGTKLAQAKKFNDPNDPCKILVATDAIGMGLNLSIRRIIFYSLIKPSINEKGERELEPITTSQALQIAGRAGRFSSRFKEGEVTTMNHEDLSLLKEILKRPVDPIRAAGLHPTAEQIEMFAYHLPDATLSNLIDIFVDFSQVDGQYFVCNMDDFKFSAELIQHIPLSLRVRYVFCTAPINKKQPFVCSSLLQFARQYSRNEPLTFAWLRRYIKWPLLPPKNIKDLMDLEAVHDVLDLYLWLSYRFMDMFPDASLIRDLQKELDGIIQDGVHNITKLIKMSETHKLLNLEGFPSGSQSRLSGTLKSQARRTRGTKALGSKATEPPSPDAGELSLASRLVQQGLLTPDMLKQLEKEWMTQQTEHNKEKTESGTHPKGTRRKKKEPDSD</sequence>
<gene>
    <name type="primary">SUPV3L1</name>
    <name type="synonym">SUV3</name>
</gene>
<name>SUV3_HUMAN</name>
<accession>Q8IYB8</accession>
<accession>A8K301</accession>
<accession>O43630</accession>
<protein>
    <recommendedName>
        <fullName>ATP-dependent RNA helicase SUPV3L1, mitochondrial</fullName>
        <ecNumber evidence="6">3.6.4.13</ecNumber>
    </recommendedName>
    <alternativeName>
        <fullName>Suppressor of var1 3-like protein 1</fullName>
        <shortName>SUV3-like protein 1</shortName>
    </alternativeName>
</protein>